<evidence type="ECO:0000255" key="1">
    <source>
        <dbReference type="HAMAP-Rule" id="MF_00145"/>
    </source>
</evidence>
<dbReference type="EC" id="2.7.2.3" evidence="1"/>
<dbReference type="EMBL" id="AP008971">
    <property type="protein sequence ID" value="BAG08210.1"/>
    <property type="molecule type" value="Genomic_DNA"/>
</dbReference>
<dbReference type="RefSeq" id="WP_012290631.1">
    <property type="nucleotide sequence ID" value="NC_010376.1"/>
</dbReference>
<dbReference type="SMR" id="B0S1H0"/>
<dbReference type="STRING" id="334413.FMG_0792"/>
<dbReference type="KEGG" id="fma:FMG_0792"/>
<dbReference type="eggNOG" id="COG0126">
    <property type="taxonomic scope" value="Bacteria"/>
</dbReference>
<dbReference type="HOGENOM" id="CLU_025427_0_2_9"/>
<dbReference type="UniPathway" id="UPA00109">
    <property type="reaction ID" value="UER00185"/>
</dbReference>
<dbReference type="Proteomes" id="UP000001319">
    <property type="component" value="Chromosome"/>
</dbReference>
<dbReference type="GO" id="GO:0005829">
    <property type="term" value="C:cytosol"/>
    <property type="evidence" value="ECO:0007669"/>
    <property type="project" value="TreeGrafter"/>
</dbReference>
<dbReference type="GO" id="GO:0043531">
    <property type="term" value="F:ADP binding"/>
    <property type="evidence" value="ECO:0007669"/>
    <property type="project" value="TreeGrafter"/>
</dbReference>
<dbReference type="GO" id="GO:0005524">
    <property type="term" value="F:ATP binding"/>
    <property type="evidence" value="ECO:0007669"/>
    <property type="project" value="UniProtKB-KW"/>
</dbReference>
<dbReference type="GO" id="GO:0004618">
    <property type="term" value="F:phosphoglycerate kinase activity"/>
    <property type="evidence" value="ECO:0007669"/>
    <property type="project" value="UniProtKB-UniRule"/>
</dbReference>
<dbReference type="GO" id="GO:0006094">
    <property type="term" value="P:gluconeogenesis"/>
    <property type="evidence" value="ECO:0007669"/>
    <property type="project" value="TreeGrafter"/>
</dbReference>
<dbReference type="GO" id="GO:0006096">
    <property type="term" value="P:glycolytic process"/>
    <property type="evidence" value="ECO:0007669"/>
    <property type="project" value="UniProtKB-UniRule"/>
</dbReference>
<dbReference type="CDD" id="cd00318">
    <property type="entry name" value="Phosphoglycerate_kinase"/>
    <property type="match status" value="1"/>
</dbReference>
<dbReference type="FunFam" id="3.40.50.1260:FF:000003">
    <property type="entry name" value="Phosphoglycerate kinase"/>
    <property type="match status" value="1"/>
</dbReference>
<dbReference type="FunFam" id="3.40.50.1260:FF:000006">
    <property type="entry name" value="Phosphoglycerate kinase"/>
    <property type="match status" value="1"/>
</dbReference>
<dbReference type="Gene3D" id="3.40.50.1260">
    <property type="entry name" value="Phosphoglycerate kinase, N-terminal domain"/>
    <property type="match status" value="2"/>
</dbReference>
<dbReference type="HAMAP" id="MF_00145">
    <property type="entry name" value="Phosphoglyc_kinase"/>
    <property type="match status" value="1"/>
</dbReference>
<dbReference type="InterPro" id="IPR001576">
    <property type="entry name" value="Phosphoglycerate_kinase"/>
</dbReference>
<dbReference type="InterPro" id="IPR015911">
    <property type="entry name" value="Phosphoglycerate_kinase_CS"/>
</dbReference>
<dbReference type="InterPro" id="IPR015824">
    <property type="entry name" value="Phosphoglycerate_kinase_N"/>
</dbReference>
<dbReference type="InterPro" id="IPR036043">
    <property type="entry name" value="Phosphoglycerate_kinase_sf"/>
</dbReference>
<dbReference type="PANTHER" id="PTHR11406">
    <property type="entry name" value="PHOSPHOGLYCERATE KINASE"/>
    <property type="match status" value="1"/>
</dbReference>
<dbReference type="PANTHER" id="PTHR11406:SF23">
    <property type="entry name" value="PHOSPHOGLYCERATE KINASE 1, CHLOROPLASTIC-RELATED"/>
    <property type="match status" value="1"/>
</dbReference>
<dbReference type="Pfam" id="PF00162">
    <property type="entry name" value="PGK"/>
    <property type="match status" value="1"/>
</dbReference>
<dbReference type="PIRSF" id="PIRSF000724">
    <property type="entry name" value="Pgk"/>
    <property type="match status" value="1"/>
</dbReference>
<dbReference type="PRINTS" id="PR00477">
    <property type="entry name" value="PHGLYCKINASE"/>
</dbReference>
<dbReference type="SUPFAM" id="SSF53748">
    <property type="entry name" value="Phosphoglycerate kinase"/>
    <property type="match status" value="1"/>
</dbReference>
<dbReference type="PROSITE" id="PS00111">
    <property type="entry name" value="PGLYCERATE_KINASE"/>
    <property type="match status" value="1"/>
</dbReference>
<accession>B0S1H0</accession>
<comment type="catalytic activity">
    <reaction evidence="1">
        <text>(2R)-3-phosphoglycerate + ATP = (2R)-3-phospho-glyceroyl phosphate + ADP</text>
        <dbReference type="Rhea" id="RHEA:14801"/>
        <dbReference type="ChEBI" id="CHEBI:30616"/>
        <dbReference type="ChEBI" id="CHEBI:57604"/>
        <dbReference type="ChEBI" id="CHEBI:58272"/>
        <dbReference type="ChEBI" id="CHEBI:456216"/>
        <dbReference type="EC" id="2.7.2.3"/>
    </reaction>
</comment>
<comment type="pathway">
    <text evidence="1">Carbohydrate degradation; glycolysis; pyruvate from D-glyceraldehyde 3-phosphate: step 2/5.</text>
</comment>
<comment type="subunit">
    <text evidence="1">Monomer.</text>
</comment>
<comment type="subcellular location">
    <subcellularLocation>
        <location evidence="1">Cytoplasm</location>
    </subcellularLocation>
</comment>
<comment type="similarity">
    <text evidence="1">Belongs to the phosphoglycerate kinase family.</text>
</comment>
<proteinExistence type="inferred from homology"/>
<reference key="1">
    <citation type="journal article" date="2008" name="DNA Res.">
        <title>Complete genome sequence of Finegoldia magna, an anaerobic opportunistic pathogen.</title>
        <authorList>
            <person name="Goto T."/>
            <person name="Yamashita A."/>
            <person name="Hirakawa H."/>
            <person name="Matsutani M."/>
            <person name="Todo K."/>
            <person name="Ohshima K."/>
            <person name="Toh H."/>
            <person name="Miyamoto K."/>
            <person name="Kuhara S."/>
            <person name="Hattori M."/>
            <person name="Shimizu T."/>
            <person name="Akimoto S."/>
        </authorList>
    </citation>
    <scope>NUCLEOTIDE SEQUENCE [LARGE SCALE GENOMIC DNA]</scope>
    <source>
        <strain>ATCC 29328 / DSM 20472 / WAL 2508</strain>
    </source>
</reference>
<gene>
    <name evidence="1" type="primary">pgk</name>
    <name type="ordered locus">FMG_0792</name>
</gene>
<organism>
    <name type="scientific">Finegoldia magna (strain ATCC 29328 / DSM 20472 / WAL 2508)</name>
    <name type="common">Peptostreptococcus magnus</name>
    <dbReference type="NCBI Taxonomy" id="334413"/>
    <lineage>
        <taxon>Bacteria</taxon>
        <taxon>Bacillati</taxon>
        <taxon>Bacillota</taxon>
        <taxon>Tissierellia</taxon>
        <taxon>Tissierellales</taxon>
        <taxon>Peptoniphilaceae</taxon>
        <taxon>Finegoldia</taxon>
    </lineage>
</organism>
<name>PGK_FINM2</name>
<keyword id="KW-0067">ATP-binding</keyword>
<keyword id="KW-0963">Cytoplasm</keyword>
<keyword id="KW-0324">Glycolysis</keyword>
<keyword id="KW-0418">Kinase</keyword>
<keyword id="KW-0547">Nucleotide-binding</keyword>
<keyword id="KW-1185">Reference proteome</keyword>
<keyword id="KW-0808">Transferase</keyword>
<sequence>MNKKTLKDLNVENKRVLVRVDFNVPIKEGIITDTNRIEASLTTIKYLIDNNAKVILMSHLGRPKGEPKPEFSLKPVAQKLSEMIGQDVKFIDSDKVVDDSVIEESKKLQPKEIMLIQNTRFRKEEEKNDQTFSKELSQLADLYVNDAFGTSHRAHASNVGVSKFLPSAVGFLVQKEIEIMGKALENPERPFTAILGGAKVSDKIGVIENLLDKVDTILIGGAMAFTFIKSQGKNVGKSLIEEDKLDLAKSLLEKAQEKGVKIFLPVDFVVAKEMTEESDSKVINIDDFTDDIAGFDIGTKTIKIFDEEIQKSKTIVWNGPMGVFEIEQFSKGTFEIANSLVKSKAITIVGGGDSASAIAKSGNKDKVTHVSTGGGASLEFLEGKVLPGIDCIDER</sequence>
<feature type="chain" id="PRO_1000096343" description="Phosphoglycerate kinase">
    <location>
        <begin position="1"/>
        <end position="395"/>
    </location>
</feature>
<feature type="binding site" evidence="1">
    <location>
        <begin position="21"/>
        <end position="23"/>
    </location>
    <ligand>
        <name>substrate</name>
    </ligand>
</feature>
<feature type="binding site" evidence="1">
    <location>
        <position position="36"/>
    </location>
    <ligand>
        <name>substrate</name>
    </ligand>
</feature>
<feature type="binding site" evidence="1">
    <location>
        <begin position="59"/>
        <end position="62"/>
    </location>
    <ligand>
        <name>substrate</name>
    </ligand>
</feature>
<feature type="binding site" evidence="1">
    <location>
        <position position="120"/>
    </location>
    <ligand>
        <name>substrate</name>
    </ligand>
</feature>
<feature type="binding site" evidence="1">
    <location>
        <position position="153"/>
    </location>
    <ligand>
        <name>substrate</name>
    </ligand>
</feature>
<feature type="binding site" evidence="1">
    <location>
        <position position="203"/>
    </location>
    <ligand>
        <name>ATP</name>
        <dbReference type="ChEBI" id="CHEBI:30616"/>
    </ligand>
</feature>
<feature type="binding site" evidence="1">
    <location>
        <position position="294"/>
    </location>
    <ligand>
        <name>ATP</name>
        <dbReference type="ChEBI" id="CHEBI:30616"/>
    </ligand>
</feature>
<feature type="binding site" evidence="1">
    <location>
        <position position="325"/>
    </location>
    <ligand>
        <name>ATP</name>
        <dbReference type="ChEBI" id="CHEBI:30616"/>
    </ligand>
</feature>
<feature type="binding site" evidence="1">
    <location>
        <begin position="351"/>
        <end position="354"/>
    </location>
    <ligand>
        <name>ATP</name>
        <dbReference type="ChEBI" id="CHEBI:30616"/>
    </ligand>
</feature>
<protein>
    <recommendedName>
        <fullName evidence="1">Phosphoglycerate kinase</fullName>
        <ecNumber evidence="1">2.7.2.3</ecNumber>
    </recommendedName>
</protein>